<evidence type="ECO:0000250" key="1"/>
<evidence type="ECO:0000269" key="2">
    <source ref="1"/>
</evidence>
<evidence type="ECO:0000305" key="3"/>
<organism>
    <name type="scientific">Casuarius casuarius</name>
    <name type="common">Southern cassowary</name>
    <name type="synonym">Struthio casuarius</name>
    <dbReference type="NCBI Taxonomy" id="8787"/>
    <lineage>
        <taxon>Eukaryota</taxon>
        <taxon>Metazoa</taxon>
        <taxon>Chordata</taxon>
        <taxon>Craniata</taxon>
        <taxon>Vertebrata</taxon>
        <taxon>Euteleostomi</taxon>
        <taxon>Archelosauria</taxon>
        <taxon>Archosauria</taxon>
        <taxon>Dinosauria</taxon>
        <taxon>Saurischia</taxon>
        <taxon>Theropoda</taxon>
        <taxon>Coelurosauria</taxon>
        <taxon>Aves</taxon>
        <taxon>Palaeognathae</taxon>
        <taxon>Casuariiformes</taxon>
        <taxon>Casuariidae</taxon>
        <taxon>Casuarius</taxon>
    </lineage>
</organism>
<comment type="catalytic activity">
    <reaction>
        <text>Hydrolysis of (1-&gt;4)-beta-linkages between N-acetylmuramic acid and N-acetyl-D-glucosamine residues in a peptidoglycan and between N-acetyl-D-glucosamine residues in chitodextrins.</text>
        <dbReference type="EC" id="3.2.1.17"/>
    </reaction>
</comment>
<comment type="subcellular location">
    <subcellularLocation>
        <location>Secreted</location>
    </subcellularLocation>
</comment>
<comment type="miscellaneous">
    <text evidence="1">Shows preference for N-acetylmuramic acid residues that are substituted with a peptide moiety. It acts only as a glycanohydrolase (By similarity).</text>
</comment>
<comment type="similarity">
    <text evidence="3">Belongs to the glycosyl hydrolase 23 family.</text>
</comment>
<proteinExistence type="evidence at protein level"/>
<reference key="1">
    <citation type="submission" date="2000-10" db="PIR data bank">
        <authorList>
            <person name="Thammasirirak S."/>
            <person name="Torikata T."/>
            <person name="Takami K."/>
            <person name="Murata K."/>
            <person name="Araki T."/>
        </authorList>
    </citation>
    <scope>PROTEIN SEQUENCE</scope>
    <scope>PYROGLUTAMATE FORMATION AT GLN-1</scope>
</reference>
<feature type="chain" id="PRO_0000193514" description="Lysozyme g">
    <location>
        <begin position="1"/>
        <end position="185"/>
    </location>
</feature>
<feature type="active site" evidence="1">
    <location>
        <position position="73"/>
    </location>
</feature>
<feature type="active site" evidence="1">
    <location>
        <position position="86"/>
    </location>
</feature>
<feature type="modified residue" description="Pyrrolidone carboxylic acid" evidence="2">
    <location>
        <position position="1"/>
    </location>
</feature>
<feature type="disulfide bond" evidence="1">
    <location>
        <begin position="4"/>
        <end position="60"/>
    </location>
</feature>
<feature type="disulfide bond" evidence="1">
    <location>
        <begin position="18"/>
        <end position="29"/>
    </location>
</feature>
<name>LYG_CASCA</name>
<dbReference type="EC" id="3.2.1.17"/>
<dbReference type="PIR" id="A59351">
    <property type="entry name" value="A59351"/>
</dbReference>
<dbReference type="SMR" id="Q7LZR3"/>
<dbReference type="GO" id="GO:0005576">
    <property type="term" value="C:extracellular region"/>
    <property type="evidence" value="ECO:0007669"/>
    <property type="project" value="UniProtKB-SubCell"/>
</dbReference>
<dbReference type="GO" id="GO:0003796">
    <property type="term" value="F:lysozyme activity"/>
    <property type="evidence" value="ECO:0007669"/>
    <property type="project" value="UniProtKB-EC"/>
</dbReference>
<dbReference type="GO" id="GO:0050830">
    <property type="term" value="P:defense response to Gram-positive bacterium"/>
    <property type="evidence" value="ECO:0007669"/>
    <property type="project" value="TreeGrafter"/>
</dbReference>
<dbReference type="GO" id="GO:0031640">
    <property type="term" value="P:killing of cells of another organism"/>
    <property type="evidence" value="ECO:0007669"/>
    <property type="project" value="UniProtKB-KW"/>
</dbReference>
<dbReference type="GO" id="GO:0009253">
    <property type="term" value="P:peptidoglycan catabolic process"/>
    <property type="evidence" value="ECO:0007669"/>
    <property type="project" value="InterPro"/>
</dbReference>
<dbReference type="CDD" id="cd01021">
    <property type="entry name" value="GEWL"/>
    <property type="match status" value="1"/>
</dbReference>
<dbReference type="FunFam" id="1.10.530.10:FF:000026">
    <property type="entry name" value="Lysozyme g"/>
    <property type="match status" value="1"/>
</dbReference>
<dbReference type="Gene3D" id="1.10.530.10">
    <property type="match status" value="1"/>
</dbReference>
<dbReference type="InterPro" id="IPR002152">
    <property type="entry name" value="Glyco_hydro_23"/>
</dbReference>
<dbReference type="InterPro" id="IPR023346">
    <property type="entry name" value="Lysozyme-like_dom_sf"/>
</dbReference>
<dbReference type="InterPro" id="IPR008258">
    <property type="entry name" value="Transglycosylase_SLT_dom_1"/>
</dbReference>
<dbReference type="PANTHER" id="PTHR31698">
    <property type="entry name" value="LYSOZYME G FAMILY MEMBER"/>
    <property type="match status" value="1"/>
</dbReference>
<dbReference type="PANTHER" id="PTHR31698:SF8">
    <property type="entry name" value="LYSOZYME G-RELATED"/>
    <property type="match status" value="1"/>
</dbReference>
<dbReference type="Pfam" id="PF01464">
    <property type="entry name" value="SLT"/>
    <property type="match status" value="1"/>
</dbReference>
<dbReference type="PIRSF" id="PIRSF001065">
    <property type="entry name" value="Lysozyme_g"/>
    <property type="match status" value="1"/>
</dbReference>
<dbReference type="PRINTS" id="PR00749">
    <property type="entry name" value="LYSOZYMEG"/>
</dbReference>
<dbReference type="SUPFAM" id="SSF53955">
    <property type="entry name" value="Lysozyme-like"/>
    <property type="match status" value="1"/>
</dbReference>
<keyword id="KW-0929">Antimicrobial</keyword>
<keyword id="KW-0081">Bacteriolytic enzyme</keyword>
<keyword id="KW-0903">Direct protein sequencing</keyword>
<keyword id="KW-1015">Disulfide bond</keyword>
<keyword id="KW-0326">Glycosidase</keyword>
<keyword id="KW-0378">Hydrolase</keyword>
<keyword id="KW-0873">Pyrrolidone carboxylic acid</keyword>
<keyword id="KW-0964">Secreted</keyword>
<accession>Q7LZR3</accession>
<protein>
    <recommendedName>
        <fullName>Lysozyme g</fullName>
        <ecNumber>3.2.1.17</ecNumber>
    </recommendedName>
    <alternativeName>
        <fullName>1,4-beta-N-acetylmuramidase</fullName>
    </alternativeName>
    <alternativeName>
        <fullName>Goose-type lysozyme</fullName>
    </alternativeName>
</protein>
<sequence length="185" mass="20426">QTGCYGVVNRIDTTGASCETAKPEKLNYCGVAASRKIAEGDLQSMDRYKTLIKKVGQKLCVDPAVIAGIISRESHAGKALKDGWGDNGNGFGLMQVDKRSHTPVGKWNGERHLTQGTEILISMIKKIQKKFPRWTKEQQLKGGISAYNAGSGNVRTYERMDIGTTHNDYANDVVARAQYYKQHGY</sequence>